<protein>
    <recommendedName>
        <fullName evidence="1">Indole-3-glycerol phosphate synthase</fullName>
        <shortName evidence="1">IGPS</shortName>
        <ecNumber evidence="1">4.1.1.48</ecNumber>
    </recommendedName>
</protein>
<reference key="1">
    <citation type="submission" date="2007-11" db="EMBL/GenBank/DDBJ databases">
        <title>Complete sequence of Petroga mobilis SJ95.</title>
        <authorList>
            <consortium name="US DOE Joint Genome Institute"/>
            <person name="Copeland A."/>
            <person name="Lucas S."/>
            <person name="Lapidus A."/>
            <person name="Barry K."/>
            <person name="Glavina del Rio T."/>
            <person name="Dalin E."/>
            <person name="Tice H."/>
            <person name="Pitluck S."/>
            <person name="Meincke L."/>
            <person name="Brettin T."/>
            <person name="Bruce D."/>
            <person name="Detter J.C."/>
            <person name="Han C."/>
            <person name="Kuske C.R."/>
            <person name="Schmutz J."/>
            <person name="Larimer F."/>
            <person name="Land M."/>
            <person name="Hauser L."/>
            <person name="Kyrpides N."/>
            <person name="Mikhailova N."/>
            <person name="Noll K."/>
            <person name="Richardson P."/>
        </authorList>
    </citation>
    <scope>NUCLEOTIDE SEQUENCE [LARGE SCALE GENOMIC DNA]</scope>
    <source>
        <strain>DSM 10674 / SJ95</strain>
    </source>
</reference>
<name>TRPC_PETMO</name>
<feature type="chain" id="PRO_1000095877" description="Indole-3-glycerol phosphate synthase">
    <location>
        <begin position="1"/>
        <end position="253"/>
    </location>
</feature>
<evidence type="ECO:0000255" key="1">
    <source>
        <dbReference type="HAMAP-Rule" id="MF_00134"/>
    </source>
</evidence>
<gene>
    <name evidence="1" type="primary">trpC</name>
    <name type="ordered locus">Pmob_1210</name>
</gene>
<accession>A9BHQ5</accession>
<sequence length="253" mass="28803">MYLEKIVETKREEVAKLKEKKISLKDSFQKGKLTLIAEIKKASPSKGIISTNFDPQRQLELYIKGGADAISILTDEKYFQGSTNILKELRPKTNLPILRKDFIIDPIQIYQSLFLGANVILLIASILTKKEISNFLKISKDIGLEAIVEVHNHQELTKVLDTETEILGINNRDLSDFSLSLRNTEKLLEELEKLGKRRDFYVISESGIKEKSDIDYLRSLEVDGVLIGEALMKENDPVLKIGELFPEKRSNLQ</sequence>
<organism>
    <name type="scientific">Petrotoga mobilis (strain DSM 10674 / SJ95)</name>
    <dbReference type="NCBI Taxonomy" id="403833"/>
    <lineage>
        <taxon>Bacteria</taxon>
        <taxon>Thermotogati</taxon>
        <taxon>Thermotogota</taxon>
        <taxon>Thermotogae</taxon>
        <taxon>Petrotogales</taxon>
        <taxon>Petrotogaceae</taxon>
        <taxon>Petrotoga</taxon>
    </lineage>
</organism>
<dbReference type="EC" id="4.1.1.48" evidence="1"/>
<dbReference type="EMBL" id="CP000879">
    <property type="protein sequence ID" value="ABX31927.1"/>
    <property type="molecule type" value="Genomic_DNA"/>
</dbReference>
<dbReference type="RefSeq" id="WP_012209027.1">
    <property type="nucleotide sequence ID" value="NC_010003.1"/>
</dbReference>
<dbReference type="SMR" id="A9BHQ5"/>
<dbReference type="STRING" id="403833.Pmob_1210"/>
<dbReference type="KEGG" id="pmo:Pmob_1210"/>
<dbReference type="eggNOG" id="COG0134">
    <property type="taxonomic scope" value="Bacteria"/>
</dbReference>
<dbReference type="HOGENOM" id="CLU_034247_2_0_0"/>
<dbReference type="OrthoDB" id="9804217at2"/>
<dbReference type="UniPathway" id="UPA00035">
    <property type="reaction ID" value="UER00043"/>
</dbReference>
<dbReference type="Proteomes" id="UP000000789">
    <property type="component" value="Chromosome"/>
</dbReference>
<dbReference type="GO" id="GO:0004425">
    <property type="term" value="F:indole-3-glycerol-phosphate synthase activity"/>
    <property type="evidence" value="ECO:0007669"/>
    <property type="project" value="UniProtKB-UniRule"/>
</dbReference>
<dbReference type="GO" id="GO:0004640">
    <property type="term" value="F:phosphoribosylanthranilate isomerase activity"/>
    <property type="evidence" value="ECO:0007669"/>
    <property type="project" value="TreeGrafter"/>
</dbReference>
<dbReference type="GO" id="GO:0000162">
    <property type="term" value="P:L-tryptophan biosynthetic process"/>
    <property type="evidence" value="ECO:0007669"/>
    <property type="project" value="UniProtKB-UniRule"/>
</dbReference>
<dbReference type="CDD" id="cd00331">
    <property type="entry name" value="IGPS"/>
    <property type="match status" value="1"/>
</dbReference>
<dbReference type="FunFam" id="3.20.20.70:FF:000024">
    <property type="entry name" value="Indole-3-glycerol phosphate synthase"/>
    <property type="match status" value="1"/>
</dbReference>
<dbReference type="Gene3D" id="3.20.20.70">
    <property type="entry name" value="Aldolase class I"/>
    <property type="match status" value="1"/>
</dbReference>
<dbReference type="HAMAP" id="MF_00134_B">
    <property type="entry name" value="IGPS_B"/>
    <property type="match status" value="1"/>
</dbReference>
<dbReference type="InterPro" id="IPR013785">
    <property type="entry name" value="Aldolase_TIM"/>
</dbReference>
<dbReference type="InterPro" id="IPR045186">
    <property type="entry name" value="Indole-3-glycerol_P_synth"/>
</dbReference>
<dbReference type="InterPro" id="IPR013798">
    <property type="entry name" value="Indole-3-glycerol_P_synth_dom"/>
</dbReference>
<dbReference type="InterPro" id="IPR001468">
    <property type="entry name" value="Indole-3-GlycerolPSynthase_CS"/>
</dbReference>
<dbReference type="InterPro" id="IPR011060">
    <property type="entry name" value="RibuloseP-bd_barrel"/>
</dbReference>
<dbReference type="NCBIfam" id="NF001377">
    <property type="entry name" value="PRK00278.2-4"/>
    <property type="match status" value="1"/>
</dbReference>
<dbReference type="PANTHER" id="PTHR22854:SF2">
    <property type="entry name" value="INDOLE-3-GLYCEROL-PHOSPHATE SYNTHASE"/>
    <property type="match status" value="1"/>
</dbReference>
<dbReference type="PANTHER" id="PTHR22854">
    <property type="entry name" value="TRYPTOPHAN BIOSYNTHESIS PROTEIN"/>
    <property type="match status" value="1"/>
</dbReference>
<dbReference type="Pfam" id="PF00218">
    <property type="entry name" value="IGPS"/>
    <property type="match status" value="1"/>
</dbReference>
<dbReference type="SUPFAM" id="SSF51366">
    <property type="entry name" value="Ribulose-phoshate binding barrel"/>
    <property type="match status" value="1"/>
</dbReference>
<dbReference type="PROSITE" id="PS00614">
    <property type="entry name" value="IGPS"/>
    <property type="match status" value="1"/>
</dbReference>
<comment type="catalytic activity">
    <reaction evidence="1">
        <text>1-(2-carboxyphenylamino)-1-deoxy-D-ribulose 5-phosphate + H(+) = (1S,2R)-1-C-(indol-3-yl)glycerol 3-phosphate + CO2 + H2O</text>
        <dbReference type="Rhea" id="RHEA:23476"/>
        <dbReference type="ChEBI" id="CHEBI:15377"/>
        <dbReference type="ChEBI" id="CHEBI:15378"/>
        <dbReference type="ChEBI" id="CHEBI:16526"/>
        <dbReference type="ChEBI" id="CHEBI:58613"/>
        <dbReference type="ChEBI" id="CHEBI:58866"/>
        <dbReference type="EC" id="4.1.1.48"/>
    </reaction>
</comment>
<comment type="pathway">
    <text evidence="1">Amino-acid biosynthesis; L-tryptophan biosynthesis; L-tryptophan from chorismate: step 4/5.</text>
</comment>
<comment type="similarity">
    <text evidence="1">Belongs to the TrpC family.</text>
</comment>
<keyword id="KW-0028">Amino-acid biosynthesis</keyword>
<keyword id="KW-0057">Aromatic amino acid biosynthesis</keyword>
<keyword id="KW-0210">Decarboxylase</keyword>
<keyword id="KW-0456">Lyase</keyword>
<keyword id="KW-0822">Tryptophan biosynthesis</keyword>
<proteinExistence type="inferred from homology"/>